<sequence length="442" mass="46576">MSGLAYLDLPAARLARGEVALPGSKSISNRVLLLAALAEGSTEITGLLDSDDTRVMLAALRQLGVSVGEVADGCVTIEGVARFPTEQAELFLGNAGTAFRPLTAALALMGGDYRLSGVPRMHERPIGDLVDALRQFGAGIEYLGQAGYPPLRIGGGSIRVDGPVRVEGSVSSQFLTALLMAAPVLARRSGQDITIEVVGELISKPYIEITLNLMARFGVSVRRDGWRAFTIARDAAYRGPGRMAIEGDASTASYFLALGAIGGGPVRVTGVGEDSIQGDVAFAATLAAMGADVRYGPGWIETRGVRVAEGGRLKAFDADFNLIPDAAMTAATLALYADGPCRLRNIGSWRVKETDRIHAMHTELEKLGAGVQSGADWLEVAPPAPGGWRDAHIGTWDDHRMAMCFSLAAFGPAAVRILDPGCVSKTFPDYFDVYAGLLAARD</sequence>
<reference key="1">
    <citation type="submission" date="1999-09" db="EMBL/GenBank/DDBJ databases">
        <title>Bordetella bronchiseptica aroA.</title>
        <authorList>
            <person name="McArthur J.D."/>
            <person name="Walker M.J."/>
        </authorList>
    </citation>
    <scope>NUCLEOTIDE SEQUENCE [GENOMIC DNA]</scope>
    <source>
        <strain>240/2</strain>
    </source>
</reference>
<reference key="2">
    <citation type="journal article" date="2003" name="Nat. Genet.">
        <title>Comparative analysis of the genome sequences of Bordetella pertussis, Bordetella parapertussis and Bordetella bronchiseptica.</title>
        <authorList>
            <person name="Parkhill J."/>
            <person name="Sebaihia M."/>
            <person name="Preston A."/>
            <person name="Murphy L.D."/>
            <person name="Thomson N.R."/>
            <person name="Harris D.E."/>
            <person name="Holden M.T.G."/>
            <person name="Churcher C.M."/>
            <person name="Bentley S.D."/>
            <person name="Mungall K.L."/>
            <person name="Cerdeno-Tarraga A.-M."/>
            <person name="Temple L."/>
            <person name="James K.D."/>
            <person name="Harris B."/>
            <person name="Quail M.A."/>
            <person name="Achtman M."/>
            <person name="Atkin R."/>
            <person name="Baker S."/>
            <person name="Basham D."/>
            <person name="Bason N."/>
            <person name="Cherevach I."/>
            <person name="Chillingworth T."/>
            <person name="Collins M."/>
            <person name="Cronin A."/>
            <person name="Davis P."/>
            <person name="Doggett J."/>
            <person name="Feltwell T."/>
            <person name="Goble A."/>
            <person name="Hamlin N."/>
            <person name="Hauser H."/>
            <person name="Holroyd S."/>
            <person name="Jagels K."/>
            <person name="Leather S."/>
            <person name="Moule S."/>
            <person name="Norberczak H."/>
            <person name="O'Neil S."/>
            <person name="Ormond D."/>
            <person name="Price C."/>
            <person name="Rabbinowitsch E."/>
            <person name="Rutter S."/>
            <person name="Sanders M."/>
            <person name="Saunders D."/>
            <person name="Seeger K."/>
            <person name="Sharp S."/>
            <person name="Simmonds M."/>
            <person name="Skelton J."/>
            <person name="Squares R."/>
            <person name="Squares S."/>
            <person name="Stevens K."/>
            <person name="Unwin L."/>
            <person name="Whitehead S."/>
            <person name="Barrell B.G."/>
            <person name="Maskell D.J."/>
        </authorList>
    </citation>
    <scope>NUCLEOTIDE SEQUENCE [LARGE SCALE GENOMIC DNA]</scope>
    <source>
        <strain>ATCC BAA-588 / NCTC 13252 / RB50</strain>
    </source>
</reference>
<name>AROA_BORBR</name>
<keyword id="KW-0028">Amino-acid biosynthesis</keyword>
<keyword id="KW-0057">Aromatic amino acid biosynthesis</keyword>
<keyword id="KW-0963">Cytoplasm</keyword>
<keyword id="KW-0808">Transferase</keyword>
<evidence type="ECO:0000255" key="1">
    <source>
        <dbReference type="HAMAP-Rule" id="MF_00210"/>
    </source>
</evidence>
<evidence type="ECO:0000305" key="2"/>
<feature type="chain" id="PRO_0000088228" description="3-phosphoshikimate 1-carboxyvinyltransferase">
    <location>
        <begin position="1"/>
        <end position="442"/>
    </location>
</feature>
<feature type="active site" description="Proton acceptor" evidence="1">
    <location>
        <position position="325"/>
    </location>
</feature>
<feature type="binding site" evidence="1">
    <location>
        <position position="25"/>
    </location>
    <ligand>
        <name>3-phosphoshikimate</name>
        <dbReference type="ChEBI" id="CHEBI:145989"/>
    </ligand>
</feature>
<feature type="binding site" evidence="1">
    <location>
        <position position="25"/>
    </location>
    <ligand>
        <name>phosphoenolpyruvate</name>
        <dbReference type="ChEBI" id="CHEBI:58702"/>
    </ligand>
</feature>
<feature type="binding site" evidence="1">
    <location>
        <position position="26"/>
    </location>
    <ligand>
        <name>3-phosphoshikimate</name>
        <dbReference type="ChEBI" id="CHEBI:145989"/>
    </ligand>
</feature>
<feature type="binding site" evidence="1">
    <location>
        <position position="30"/>
    </location>
    <ligand>
        <name>3-phosphoshikimate</name>
        <dbReference type="ChEBI" id="CHEBI:145989"/>
    </ligand>
</feature>
<feature type="binding site" evidence="1">
    <location>
        <position position="96"/>
    </location>
    <ligand>
        <name>phosphoenolpyruvate</name>
        <dbReference type="ChEBI" id="CHEBI:58702"/>
    </ligand>
</feature>
<feature type="binding site" evidence="1">
    <location>
        <position position="124"/>
    </location>
    <ligand>
        <name>phosphoenolpyruvate</name>
        <dbReference type="ChEBI" id="CHEBI:58702"/>
    </ligand>
</feature>
<feature type="binding site" evidence="1">
    <location>
        <position position="171"/>
    </location>
    <ligand>
        <name>3-phosphoshikimate</name>
        <dbReference type="ChEBI" id="CHEBI:145989"/>
    </ligand>
</feature>
<feature type="binding site" evidence="1">
    <location>
        <position position="172"/>
    </location>
    <ligand>
        <name>3-phosphoshikimate</name>
        <dbReference type="ChEBI" id="CHEBI:145989"/>
    </ligand>
</feature>
<feature type="binding site" evidence="1">
    <location>
        <position position="173"/>
    </location>
    <ligand>
        <name>3-phosphoshikimate</name>
        <dbReference type="ChEBI" id="CHEBI:145989"/>
    </ligand>
</feature>
<feature type="binding site" evidence="1">
    <location>
        <position position="173"/>
    </location>
    <ligand>
        <name>phosphoenolpyruvate</name>
        <dbReference type="ChEBI" id="CHEBI:58702"/>
    </ligand>
</feature>
<feature type="binding site" evidence="1">
    <location>
        <position position="203"/>
    </location>
    <ligand>
        <name>3-phosphoshikimate</name>
        <dbReference type="ChEBI" id="CHEBI:145989"/>
    </ligand>
</feature>
<feature type="binding site" evidence="1">
    <location>
        <position position="325"/>
    </location>
    <ligand>
        <name>3-phosphoshikimate</name>
        <dbReference type="ChEBI" id="CHEBI:145989"/>
    </ligand>
</feature>
<feature type="binding site" evidence="1">
    <location>
        <position position="352"/>
    </location>
    <ligand>
        <name>3-phosphoshikimate</name>
        <dbReference type="ChEBI" id="CHEBI:145989"/>
    </ligand>
</feature>
<feature type="binding site" evidence="1">
    <location>
        <position position="356"/>
    </location>
    <ligand>
        <name>phosphoenolpyruvate</name>
        <dbReference type="ChEBI" id="CHEBI:58702"/>
    </ligand>
</feature>
<feature type="binding site" evidence="1">
    <location>
        <position position="400"/>
    </location>
    <ligand>
        <name>phosphoenolpyruvate</name>
        <dbReference type="ChEBI" id="CHEBI:58702"/>
    </ligand>
</feature>
<feature type="binding site" evidence="1">
    <location>
        <position position="425"/>
    </location>
    <ligand>
        <name>phosphoenolpyruvate</name>
        <dbReference type="ChEBI" id="CHEBI:58702"/>
    </ligand>
</feature>
<feature type="sequence conflict" description="In Ref. 1; AAF01290." evidence="2" ref="1">
    <original>C</original>
    <variation>R</variation>
    <location>
        <position position="74"/>
    </location>
</feature>
<protein>
    <recommendedName>
        <fullName evidence="1">3-phosphoshikimate 1-carboxyvinyltransferase</fullName>
        <ecNumber evidence="1">2.5.1.19</ecNumber>
    </recommendedName>
    <alternativeName>
        <fullName evidence="1">5-enolpyruvylshikimate-3-phosphate synthase</fullName>
        <shortName evidence="1">EPSP synthase</shortName>
        <shortName evidence="1">EPSPS</shortName>
    </alternativeName>
</protein>
<comment type="function">
    <text evidence="1">Catalyzes the transfer of the enolpyruvyl moiety of phosphoenolpyruvate (PEP) to the 5-hydroxyl of shikimate-3-phosphate (S3P) to produce enolpyruvyl shikimate-3-phosphate and inorganic phosphate.</text>
</comment>
<comment type="catalytic activity">
    <reaction evidence="1">
        <text>3-phosphoshikimate + phosphoenolpyruvate = 5-O-(1-carboxyvinyl)-3-phosphoshikimate + phosphate</text>
        <dbReference type="Rhea" id="RHEA:21256"/>
        <dbReference type="ChEBI" id="CHEBI:43474"/>
        <dbReference type="ChEBI" id="CHEBI:57701"/>
        <dbReference type="ChEBI" id="CHEBI:58702"/>
        <dbReference type="ChEBI" id="CHEBI:145989"/>
        <dbReference type="EC" id="2.5.1.19"/>
    </reaction>
    <physiologicalReaction direction="left-to-right" evidence="1">
        <dbReference type="Rhea" id="RHEA:21257"/>
    </physiologicalReaction>
</comment>
<comment type="pathway">
    <text evidence="1">Metabolic intermediate biosynthesis; chorismate biosynthesis; chorismate from D-erythrose 4-phosphate and phosphoenolpyruvate: step 6/7.</text>
</comment>
<comment type="subunit">
    <text evidence="1">Monomer.</text>
</comment>
<comment type="subcellular location">
    <subcellularLocation>
        <location evidence="1">Cytoplasm</location>
    </subcellularLocation>
</comment>
<comment type="similarity">
    <text evidence="1 2">Belongs to the EPSP synthase family.</text>
</comment>
<dbReference type="EC" id="2.5.1.19" evidence="1"/>
<dbReference type="EMBL" id="AF182427">
    <property type="protein sequence ID" value="AAF01290.1"/>
    <property type="molecule type" value="Genomic_DNA"/>
</dbReference>
<dbReference type="EMBL" id="BX640447">
    <property type="protein sequence ID" value="CAE33961.1"/>
    <property type="molecule type" value="Genomic_DNA"/>
</dbReference>
<dbReference type="RefSeq" id="WP_003813363.1">
    <property type="nucleotide sequence ID" value="NC_002927.3"/>
</dbReference>
<dbReference type="SMR" id="Q9RND7"/>
<dbReference type="GeneID" id="56477932"/>
<dbReference type="KEGG" id="bbr:BB3469"/>
<dbReference type="eggNOG" id="COG0128">
    <property type="taxonomic scope" value="Bacteria"/>
</dbReference>
<dbReference type="HOGENOM" id="CLU_024321_0_0_4"/>
<dbReference type="UniPathway" id="UPA00053">
    <property type="reaction ID" value="UER00089"/>
</dbReference>
<dbReference type="Proteomes" id="UP000001027">
    <property type="component" value="Chromosome"/>
</dbReference>
<dbReference type="GO" id="GO:0005737">
    <property type="term" value="C:cytoplasm"/>
    <property type="evidence" value="ECO:0007669"/>
    <property type="project" value="UniProtKB-SubCell"/>
</dbReference>
<dbReference type="GO" id="GO:0003866">
    <property type="term" value="F:3-phosphoshikimate 1-carboxyvinyltransferase activity"/>
    <property type="evidence" value="ECO:0007669"/>
    <property type="project" value="UniProtKB-UniRule"/>
</dbReference>
<dbReference type="GO" id="GO:0008652">
    <property type="term" value="P:amino acid biosynthetic process"/>
    <property type="evidence" value="ECO:0007669"/>
    <property type="project" value="UniProtKB-KW"/>
</dbReference>
<dbReference type="GO" id="GO:0009073">
    <property type="term" value="P:aromatic amino acid family biosynthetic process"/>
    <property type="evidence" value="ECO:0007669"/>
    <property type="project" value="UniProtKB-KW"/>
</dbReference>
<dbReference type="GO" id="GO:0009423">
    <property type="term" value="P:chorismate biosynthetic process"/>
    <property type="evidence" value="ECO:0007669"/>
    <property type="project" value="UniProtKB-UniRule"/>
</dbReference>
<dbReference type="CDD" id="cd01556">
    <property type="entry name" value="EPSP_synthase"/>
    <property type="match status" value="1"/>
</dbReference>
<dbReference type="FunFam" id="3.65.10.10:FF:000004">
    <property type="entry name" value="3-phosphoshikimate 1-carboxyvinyltransferase"/>
    <property type="match status" value="1"/>
</dbReference>
<dbReference type="Gene3D" id="3.65.10.10">
    <property type="entry name" value="Enolpyruvate transferase domain"/>
    <property type="match status" value="2"/>
</dbReference>
<dbReference type="HAMAP" id="MF_00210">
    <property type="entry name" value="EPSP_synth"/>
    <property type="match status" value="1"/>
</dbReference>
<dbReference type="InterPro" id="IPR001986">
    <property type="entry name" value="Enolpyruvate_Tfrase_dom"/>
</dbReference>
<dbReference type="InterPro" id="IPR036968">
    <property type="entry name" value="Enolpyruvate_Tfrase_sf"/>
</dbReference>
<dbReference type="InterPro" id="IPR006264">
    <property type="entry name" value="EPSP_synthase"/>
</dbReference>
<dbReference type="InterPro" id="IPR023193">
    <property type="entry name" value="EPSP_synthase_CS"/>
</dbReference>
<dbReference type="InterPro" id="IPR013792">
    <property type="entry name" value="RNA3'P_cycl/enolpyr_Trfase_a/b"/>
</dbReference>
<dbReference type="NCBIfam" id="TIGR01356">
    <property type="entry name" value="aroA"/>
    <property type="match status" value="1"/>
</dbReference>
<dbReference type="PANTHER" id="PTHR21090">
    <property type="entry name" value="AROM/DEHYDROQUINATE SYNTHASE"/>
    <property type="match status" value="1"/>
</dbReference>
<dbReference type="PANTHER" id="PTHR21090:SF5">
    <property type="entry name" value="PENTAFUNCTIONAL AROM POLYPEPTIDE"/>
    <property type="match status" value="1"/>
</dbReference>
<dbReference type="Pfam" id="PF00275">
    <property type="entry name" value="EPSP_synthase"/>
    <property type="match status" value="1"/>
</dbReference>
<dbReference type="PIRSF" id="PIRSF000505">
    <property type="entry name" value="EPSPS"/>
    <property type="match status" value="1"/>
</dbReference>
<dbReference type="SUPFAM" id="SSF55205">
    <property type="entry name" value="EPT/RTPC-like"/>
    <property type="match status" value="1"/>
</dbReference>
<dbReference type="PROSITE" id="PS00104">
    <property type="entry name" value="EPSP_SYNTHASE_1"/>
    <property type="match status" value="1"/>
</dbReference>
<dbReference type="PROSITE" id="PS00885">
    <property type="entry name" value="EPSP_SYNTHASE_2"/>
    <property type="match status" value="1"/>
</dbReference>
<accession>Q9RND7</accession>
<proteinExistence type="inferred from homology"/>
<organism>
    <name type="scientific">Bordetella bronchiseptica (strain ATCC BAA-588 / NCTC 13252 / RB50)</name>
    <name type="common">Alcaligenes bronchisepticus</name>
    <dbReference type="NCBI Taxonomy" id="257310"/>
    <lineage>
        <taxon>Bacteria</taxon>
        <taxon>Pseudomonadati</taxon>
        <taxon>Pseudomonadota</taxon>
        <taxon>Betaproteobacteria</taxon>
        <taxon>Burkholderiales</taxon>
        <taxon>Alcaligenaceae</taxon>
        <taxon>Bordetella</taxon>
    </lineage>
</organism>
<gene>
    <name evidence="1" type="primary">aroA</name>
    <name type="ordered locus">BB3469</name>
</gene>